<organism>
    <name type="scientific">Influenza A virus (strain A/Duck/Alberta/28/1976 H4N6)</name>
    <dbReference type="NCBI Taxonomy" id="385638"/>
    <lineage>
        <taxon>Viruses</taxon>
        <taxon>Riboviria</taxon>
        <taxon>Orthornavirae</taxon>
        <taxon>Negarnaviricota</taxon>
        <taxon>Polyploviricotina</taxon>
        <taxon>Insthoviricetes</taxon>
        <taxon>Articulavirales</taxon>
        <taxon>Orthomyxoviridae</taxon>
        <taxon>Alphainfluenzavirus</taxon>
        <taxon>Alphainfluenzavirus influenzae</taxon>
        <taxon>Influenza A virus</taxon>
    </lineage>
</organism>
<comment type="function">
    <text>Catalyzes the removal of terminal sialic acid residues from viral and cellular glycoconjugates. Cleaves off the terminal sialic acids on the glycosylated HA during virus budding to facilitate virus release. Additionally helps virus spread through the circulation by further removing sialic acids from the cell surface. These cleavages prevent self-aggregation and ensure the efficient spread of the progeny virus from cell to cell. Otherwise, infection would be limited to one round of replication. Described as a receptor-destroying enzyme because it cleaves a terminal sialic acid from the cellular receptors. May facilitate viral invasion of the upper airways by cleaving the sialic acid moieties on the mucin of the airway epithelial cells. Likely to plays a role in the budding process through its association with lipid rafts during intracellular transport. May additionally display a raft-association independent effect on budding. Plays a role in the determination of host range restriction on replication and virulence. Sialidase activity in late endosome/lysosome traffic seems to enhance virus replication.</text>
</comment>
<comment type="catalytic activity">
    <reaction>
        <text>Hydrolysis of alpha-(2-&gt;3)-, alpha-(2-&gt;6)-, alpha-(2-&gt;8)- glycosidic linkages of terminal sialic acid residues in oligosaccharides, glycoproteins, glycolipids, colominic acid and synthetic substrates.</text>
        <dbReference type="EC" id="3.2.1.18"/>
    </reaction>
</comment>
<comment type="cofactor">
    <cofactor evidence="1">
        <name>Ca(2+)</name>
        <dbReference type="ChEBI" id="CHEBI:29108"/>
    </cofactor>
    <text evidence="1">Binds 1 Ca(2+) ion.</text>
</comment>
<comment type="activity regulation">
    <text>Inhibited by the neuraminidase inhibitors zanamivir (Relenza) and oseltamivir (Tamiflu). These drugs interfere with the release of progeny virus from infected cells and are effective against all influenza strains. Resistance to neuraminidase inhibitors is quite rare.</text>
</comment>
<comment type="subunit">
    <text evidence="1">Homotetramer.</text>
</comment>
<comment type="subcellular location">
    <subcellularLocation>
        <location evidence="1">Virion membrane</location>
    </subcellularLocation>
    <subcellularLocation>
        <location evidence="1">Host apical cell membrane</location>
        <topology evidence="1">Single-pass type II membrane protein</topology>
    </subcellularLocation>
    <text evidence="1">Preferentially accumulates at the apical plasma membrane in infected polarized epithelial cells, which is the virus assembly site. Uses lipid rafts for cell surface transport and apical sorting. In the virion, forms a mushroom-shaped spike on the surface of the membrane (By similarity).</text>
</comment>
<comment type="domain">
    <text evidence="1">Intact N-terminus is essential for virion morphogenesis. Possesses two apical sorting signals, one in the ectodomain, which is likely to be a glycan, and the other in the transmembrane domain. The transmembrane domain also plays a role in lipid raft association (By similarity).</text>
</comment>
<comment type="PTM">
    <text evidence="1">N-glycosylated.</text>
</comment>
<comment type="miscellaneous">
    <text>The influenza A genome consist of 8 RNA segments. Genetic variation of hemagglutinin and/or neuraminidase genes results in the emergence of new influenza strains. The mechanism of variation can be the result of point mutations or the result of genetic reassortment between segments of two different strains.</text>
</comment>
<comment type="similarity">
    <text evidence="3">Belongs to the glycosyl hydrolase 34 family.</text>
</comment>
<feature type="chain" id="PRO_0000078682" description="Neuraminidase">
    <location>
        <begin position="1"/>
        <end position="103" status="greater than"/>
    </location>
</feature>
<feature type="topological domain" description="Intravirion" evidence="2">
    <location>
        <begin position="1"/>
        <end position="6"/>
    </location>
</feature>
<feature type="transmembrane region" description="Helical; Signal-anchor for type II membrane protein" evidence="2">
    <location>
        <begin position="7"/>
        <end position="35"/>
    </location>
</feature>
<feature type="topological domain" description="Virion surface" evidence="2">
    <location>
        <begin position="36"/>
        <end position="103" status="greater than"/>
    </location>
</feature>
<feature type="region of interest" description="Involved in apical transport and lipid raft association" evidence="1">
    <location>
        <begin position="11"/>
        <end position="33"/>
    </location>
</feature>
<feature type="region of interest" description="Hypervariable stalk region">
    <location>
        <begin position="36"/>
        <end position="90"/>
    </location>
</feature>
<feature type="region of interest" description="Head of neuraminidase">
    <location>
        <begin position="91"/>
        <end position="103" status="greater than"/>
    </location>
</feature>
<feature type="glycosylation site" description="N-linked (GlcNAc...) asparagine; by host" evidence="2">
    <location>
        <position position="51"/>
    </location>
</feature>
<feature type="glycosylation site" description="N-linked (GlcNAc...) asparagine; by host" evidence="2">
    <location>
        <position position="54"/>
    </location>
</feature>
<feature type="glycosylation site" description="N-linked (GlcNAc...) asparagine; by host" evidence="2">
    <location>
        <position position="67"/>
    </location>
</feature>
<feature type="glycosylation site" description="N-linked (GlcNAc...) asparagine; by host" evidence="2">
    <location>
        <position position="70"/>
    </location>
</feature>
<feature type="glycosylation site" description="N-linked (GlcNAc...) asparagine; by host" evidence="2">
    <location>
        <position position="86"/>
    </location>
</feature>
<feature type="sequence conflict" description="In Ref. 2; AAA43358." evidence="3" ref="2">
    <original>Q</original>
    <variation>L</variation>
    <location>
        <position position="22"/>
    </location>
</feature>
<feature type="non-terminal residue">
    <location>
        <position position="103"/>
    </location>
</feature>
<dbReference type="EC" id="3.2.1.18"/>
<dbReference type="EMBL" id="V01095">
    <property type="protein sequence ID" value="CAA24279.1"/>
    <property type="molecule type" value="Genomic_RNA"/>
</dbReference>
<dbReference type="EMBL" id="K01009">
    <property type="protein sequence ID" value="AAA43358.1"/>
    <property type="molecule type" value="Genomic_RNA"/>
</dbReference>
<dbReference type="CAZy" id="GH34">
    <property type="family name" value="Glycoside Hydrolase Family 34"/>
</dbReference>
<dbReference type="GlyCosmos" id="P03479">
    <property type="glycosylation" value="5 sites, No reported glycans"/>
</dbReference>
<dbReference type="GO" id="GO:0020002">
    <property type="term" value="C:host cell plasma membrane"/>
    <property type="evidence" value="ECO:0007669"/>
    <property type="project" value="UniProtKB-SubCell"/>
</dbReference>
<dbReference type="GO" id="GO:0016020">
    <property type="term" value="C:membrane"/>
    <property type="evidence" value="ECO:0007669"/>
    <property type="project" value="UniProtKB-KW"/>
</dbReference>
<dbReference type="GO" id="GO:0055036">
    <property type="term" value="C:virion membrane"/>
    <property type="evidence" value="ECO:0007669"/>
    <property type="project" value="UniProtKB-SubCell"/>
</dbReference>
<dbReference type="GO" id="GO:0004308">
    <property type="term" value="F:exo-alpha-sialidase activity"/>
    <property type="evidence" value="ECO:0007669"/>
    <property type="project" value="UniProtKB-EC"/>
</dbReference>
<dbReference type="GO" id="GO:0046872">
    <property type="term" value="F:metal ion binding"/>
    <property type="evidence" value="ECO:0007669"/>
    <property type="project" value="UniProtKB-KW"/>
</dbReference>
<evidence type="ECO:0000250" key="1"/>
<evidence type="ECO:0000255" key="2"/>
<evidence type="ECO:0000305" key="3"/>
<protein>
    <recommendedName>
        <fullName>Neuraminidase</fullName>
        <ecNumber>3.2.1.18</ecNumber>
    </recommendedName>
</protein>
<gene>
    <name type="primary">NA</name>
</gene>
<sequence>MNPNQKIICISATGMTLSVVSQLIGLANLGLNIGLHFKVGETPEIGTPSVNETNSTTTIINYNTQNNFTNVTNIVLIKEEDEMFTNLSKPLCEVNSWHILSRT</sequence>
<keyword id="KW-0106">Calcium</keyword>
<keyword id="KW-0325">Glycoprotein</keyword>
<keyword id="KW-0326">Glycosidase</keyword>
<keyword id="KW-1032">Host cell membrane</keyword>
<keyword id="KW-1043">Host membrane</keyword>
<keyword id="KW-0378">Hydrolase</keyword>
<keyword id="KW-0472">Membrane</keyword>
<keyword id="KW-0479">Metal-binding</keyword>
<keyword id="KW-0735">Signal-anchor</keyword>
<keyword id="KW-0812">Transmembrane</keyword>
<keyword id="KW-1133">Transmembrane helix</keyword>
<keyword id="KW-0946">Virion</keyword>
<name>NRAM_I76A1</name>
<reference key="1">
    <citation type="journal article" date="1982" name="Biochemistry">
        <title>Variation in the membrane-insertion and 'stalk' sequences in eight subtypes of influenza type A virus neuraminidase.</title>
        <authorList>
            <person name="Blok J."/>
            <person name="Air G.M."/>
        </authorList>
    </citation>
    <scope>NUCLEOTIDE SEQUENCE [GENOMIC RNA]</scope>
</reference>
<reference key="2">
    <citation type="journal article" date="1982" name="Virology">
        <title>Sequence variation at the 3' end of the neuraminidase gene from 39 influenza type A viruses.</title>
        <authorList>
            <person name="Blok J."/>
            <person name="Air G.M."/>
        </authorList>
    </citation>
    <scope>NUCLEOTIDE SEQUENCE [GENOMIC RNA]</scope>
</reference>
<reference key="3">
    <citation type="journal article" date="2004" name="Virus Res.">
        <title>Assembly and budding of influenza virus.</title>
        <authorList>
            <person name="Nayak D.P."/>
            <person name="Hui E.K."/>
            <person name="Barman S."/>
        </authorList>
    </citation>
    <scope>REVIEW</scope>
</reference>
<reference key="4">
    <citation type="journal article" date="2005" name="N. Engl. J. Med.">
        <title>Neuraminidase inhibitors for influenza.</title>
        <authorList>
            <person name="Moscona A."/>
        </authorList>
    </citation>
    <scope>REVIEW</scope>
</reference>
<reference key="5">
    <citation type="journal article" date="2005" name="Biol. Pharm. Bull.">
        <title>Sialobiology of influenza: molecular mechanism of host range variation of influenza viruses.</title>
        <authorList>
            <person name="Suzuki Y."/>
        </authorList>
    </citation>
    <scope>REVIEW</scope>
</reference>
<organismHost>
    <name type="scientific">Aves</name>
    <dbReference type="NCBI Taxonomy" id="8782"/>
</organismHost>
<organismHost>
    <name type="scientific">Sus scrofa</name>
    <name type="common">Pig</name>
    <dbReference type="NCBI Taxonomy" id="9823"/>
</organismHost>
<proteinExistence type="inferred from homology"/>
<accession>P03479</accession>
<accession>Q84031</accession>